<gene>
    <name evidence="1" type="primary">xseA</name>
    <name type="ordered locus">ECDH10B_2675</name>
</gene>
<accession>B1XAY4</accession>
<evidence type="ECO:0000255" key="1">
    <source>
        <dbReference type="HAMAP-Rule" id="MF_00378"/>
    </source>
</evidence>
<keyword id="KW-0963">Cytoplasm</keyword>
<keyword id="KW-0269">Exonuclease</keyword>
<keyword id="KW-0378">Hydrolase</keyword>
<keyword id="KW-0540">Nuclease</keyword>
<dbReference type="EC" id="3.1.11.6" evidence="1"/>
<dbReference type="EMBL" id="CP000948">
    <property type="protein sequence ID" value="ACB03661.1"/>
    <property type="molecule type" value="Genomic_DNA"/>
</dbReference>
<dbReference type="RefSeq" id="WP_000937912.1">
    <property type="nucleotide sequence ID" value="NC_010473.1"/>
</dbReference>
<dbReference type="SMR" id="B1XAY4"/>
<dbReference type="KEGG" id="ecd:ECDH10B_2675"/>
<dbReference type="HOGENOM" id="CLU_023625_3_1_6"/>
<dbReference type="GO" id="GO:0005737">
    <property type="term" value="C:cytoplasm"/>
    <property type="evidence" value="ECO:0007669"/>
    <property type="project" value="UniProtKB-SubCell"/>
</dbReference>
<dbReference type="GO" id="GO:0009318">
    <property type="term" value="C:exodeoxyribonuclease VII complex"/>
    <property type="evidence" value="ECO:0007669"/>
    <property type="project" value="InterPro"/>
</dbReference>
<dbReference type="GO" id="GO:0008855">
    <property type="term" value="F:exodeoxyribonuclease VII activity"/>
    <property type="evidence" value="ECO:0007669"/>
    <property type="project" value="UniProtKB-UniRule"/>
</dbReference>
<dbReference type="GO" id="GO:0003676">
    <property type="term" value="F:nucleic acid binding"/>
    <property type="evidence" value="ECO:0007669"/>
    <property type="project" value="InterPro"/>
</dbReference>
<dbReference type="GO" id="GO:0006308">
    <property type="term" value="P:DNA catabolic process"/>
    <property type="evidence" value="ECO:0007669"/>
    <property type="project" value="UniProtKB-UniRule"/>
</dbReference>
<dbReference type="CDD" id="cd04489">
    <property type="entry name" value="ExoVII_LU_OBF"/>
    <property type="match status" value="1"/>
</dbReference>
<dbReference type="HAMAP" id="MF_00378">
    <property type="entry name" value="Exonuc_7_L"/>
    <property type="match status" value="1"/>
</dbReference>
<dbReference type="InterPro" id="IPR003753">
    <property type="entry name" value="Exonuc_VII_L"/>
</dbReference>
<dbReference type="InterPro" id="IPR020579">
    <property type="entry name" value="Exonuc_VII_lsu_C"/>
</dbReference>
<dbReference type="InterPro" id="IPR025824">
    <property type="entry name" value="OB-fold_nuc-bd_dom"/>
</dbReference>
<dbReference type="NCBIfam" id="TIGR00237">
    <property type="entry name" value="xseA"/>
    <property type="match status" value="1"/>
</dbReference>
<dbReference type="PANTHER" id="PTHR30008">
    <property type="entry name" value="EXODEOXYRIBONUCLEASE 7 LARGE SUBUNIT"/>
    <property type="match status" value="1"/>
</dbReference>
<dbReference type="PANTHER" id="PTHR30008:SF0">
    <property type="entry name" value="EXODEOXYRIBONUCLEASE 7 LARGE SUBUNIT"/>
    <property type="match status" value="1"/>
</dbReference>
<dbReference type="Pfam" id="PF02601">
    <property type="entry name" value="Exonuc_VII_L"/>
    <property type="match status" value="1"/>
</dbReference>
<dbReference type="Pfam" id="PF13742">
    <property type="entry name" value="tRNA_anti_2"/>
    <property type="match status" value="1"/>
</dbReference>
<feature type="chain" id="PRO_1000122057" description="Exodeoxyribonuclease 7 large subunit">
    <location>
        <begin position="1"/>
        <end position="456"/>
    </location>
</feature>
<reference key="1">
    <citation type="journal article" date="2008" name="J. Bacteriol.">
        <title>The complete genome sequence of Escherichia coli DH10B: insights into the biology of a laboratory workhorse.</title>
        <authorList>
            <person name="Durfee T."/>
            <person name="Nelson R."/>
            <person name="Baldwin S."/>
            <person name="Plunkett G. III"/>
            <person name="Burland V."/>
            <person name="Mau B."/>
            <person name="Petrosino J.F."/>
            <person name="Qin X."/>
            <person name="Muzny D.M."/>
            <person name="Ayele M."/>
            <person name="Gibbs R.A."/>
            <person name="Csorgo B."/>
            <person name="Posfai G."/>
            <person name="Weinstock G.M."/>
            <person name="Blattner F.R."/>
        </authorList>
    </citation>
    <scope>NUCLEOTIDE SEQUENCE [LARGE SCALE GENOMIC DNA]</scope>
    <source>
        <strain>K12 / DH10B</strain>
    </source>
</reference>
<organism>
    <name type="scientific">Escherichia coli (strain K12 / DH10B)</name>
    <dbReference type="NCBI Taxonomy" id="316385"/>
    <lineage>
        <taxon>Bacteria</taxon>
        <taxon>Pseudomonadati</taxon>
        <taxon>Pseudomonadota</taxon>
        <taxon>Gammaproteobacteria</taxon>
        <taxon>Enterobacterales</taxon>
        <taxon>Enterobacteriaceae</taxon>
        <taxon>Escherichia</taxon>
    </lineage>
</organism>
<comment type="function">
    <text evidence="1">Bidirectionally degrades single-stranded DNA into large acid-insoluble oligonucleotides, which are then degraded further into small acid-soluble oligonucleotides.</text>
</comment>
<comment type="catalytic activity">
    <reaction evidence="1">
        <text>Exonucleolytic cleavage in either 5'- to 3'- or 3'- to 5'-direction to yield nucleoside 5'-phosphates.</text>
        <dbReference type="EC" id="3.1.11.6"/>
    </reaction>
</comment>
<comment type="subunit">
    <text evidence="1">Heterooligomer composed of large and small subunits.</text>
</comment>
<comment type="subcellular location">
    <subcellularLocation>
        <location evidence="1">Cytoplasm</location>
    </subcellularLocation>
</comment>
<comment type="similarity">
    <text evidence="1">Belongs to the XseA family.</text>
</comment>
<protein>
    <recommendedName>
        <fullName evidence="1">Exodeoxyribonuclease 7 large subunit</fullName>
        <ecNumber evidence="1">3.1.11.6</ecNumber>
    </recommendedName>
    <alternativeName>
        <fullName evidence="1">Exodeoxyribonuclease VII large subunit</fullName>
        <shortName evidence="1">Exonuclease VII large subunit</shortName>
    </alternativeName>
</protein>
<proteinExistence type="inferred from homology"/>
<name>EX7L_ECODH</name>
<sequence>MLPSQSPAIFTVSRLNQTVRLLLEHEMGQVWISGEISNFTQPASGHWYFTLKDDTAQVRCAMFRNSNRRVTFRPQHGQQVLVRANITLYEPRGDYQIIVESMQPAGEGLLQQKYEQLKAKLQAEGLFDQQYKKPLPSPAHCVGVITSKTGAALHDILHVLKRRDPSLPVIIYPAAVQGDDAPGQIVRAIELANQRNECDVLIVGRGGGSLEDLWSFNDERVARAIFTSRIPVVSAVGHETDVTIADFVADLRAPTPSAAAEVVSRNQQELLRQVQSTRQRLEMAMDYYLANRTRRFTQIHHRLQQQHPQLRLARQQTMLERLQKRMSFALENQLKRTGQQQQRLTQRLNQQNPQPKIHRAQTRIQQLEYRLAETLRAQLSATRERFGNAVTHLEAVSPLSTLARGYSVTTATDGNVLKKVKQVKAGEMLTTRLEDGWIESEVKNIQPVKKSRKKVH</sequence>